<keyword id="KW-0997">Cell inner membrane</keyword>
<keyword id="KW-1003">Cell membrane</keyword>
<keyword id="KW-0472">Membrane</keyword>
<keyword id="KW-0520">NAD</keyword>
<keyword id="KW-0874">Quinone</keyword>
<keyword id="KW-1278">Translocase</keyword>
<keyword id="KW-0812">Transmembrane</keyword>
<keyword id="KW-1133">Transmembrane helix</keyword>
<keyword id="KW-0813">Transport</keyword>
<keyword id="KW-0830">Ubiquinone</keyword>
<evidence type="ECO:0000255" key="1">
    <source>
        <dbReference type="HAMAP-Rule" id="MF_01456"/>
    </source>
</evidence>
<proteinExistence type="inferred from homology"/>
<organism>
    <name type="scientific">Neisseria gonorrhoeae (strain NCCP11945)</name>
    <dbReference type="NCBI Taxonomy" id="521006"/>
    <lineage>
        <taxon>Bacteria</taxon>
        <taxon>Pseudomonadati</taxon>
        <taxon>Pseudomonadota</taxon>
        <taxon>Betaproteobacteria</taxon>
        <taxon>Neisseriales</taxon>
        <taxon>Neisseriaceae</taxon>
        <taxon>Neisseria</taxon>
    </lineage>
</organism>
<accession>B4RPH4</accession>
<reference key="1">
    <citation type="journal article" date="2008" name="J. Bacteriol.">
        <title>Complete genome sequence of Neisseria gonorrhoeae NCCP11945.</title>
        <authorList>
            <person name="Chung G.T."/>
            <person name="Yoo J.S."/>
            <person name="Oh H.B."/>
            <person name="Lee Y.S."/>
            <person name="Cha S.H."/>
            <person name="Kim S.J."/>
            <person name="Yoo C.K."/>
        </authorList>
    </citation>
    <scope>NUCLEOTIDE SEQUENCE [LARGE SCALE GENOMIC DNA]</scope>
    <source>
        <strain>NCCP11945</strain>
    </source>
</reference>
<protein>
    <recommendedName>
        <fullName evidence="1">NADH-quinone oxidoreductase subunit K</fullName>
        <ecNumber evidence="1">7.1.1.-</ecNumber>
    </recommendedName>
    <alternativeName>
        <fullName evidence="1">NADH dehydrogenase I subunit K</fullName>
    </alternativeName>
    <alternativeName>
        <fullName evidence="1">NDH-1 subunit K</fullName>
    </alternativeName>
</protein>
<sequence length="101" mass="11078">MITLTHYLVLGALLFGISAMGIFMNRKNVLVLLMSIELMLLAVNFNFIAFSQHLGDTAGQIFVFFVLTVAAAESAIGLAIMVLVYRNRQTINVADLDELKG</sequence>
<dbReference type="EC" id="7.1.1.-" evidence="1"/>
<dbReference type="EMBL" id="CP001050">
    <property type="protein sequence ID" value="ACF30751.1"/>
    <property type="molecule type" value="Genomic_DNA"/>
</dbReference>
<dbReference type="RefSeq" id="WP_002215628.1">
    <property type="nucleotide sequence ID" value="NC_011035.1"/>
</dbReference>
<dbReference type="SMR" id="B4RPH4"/>
<dbReference type="GeneID" id="93387341"/>
<dbReference type="KEGG" id="ngk:NGK_2143"/>
<dbReference type="HOGENOM" id="CLU_144724_2_0_4"/>
<dbReference type="Proteomes" id="UP000002564">
    <property type="component" value="Chromosome"/>
</dbReference>
<dbReference type="GO" id="GO:0030964">
    <property type="term" value="C:NADH dehydrogenase complex"/>
    <property type="evidence" value="ECO:0007669"/>
    <property type="project" value="TreeGrafter"/>
</dbReference>
<dbReference type="GO" id="GO:0005886">
    <property type="term" value="C:plasma membrane"/>
    <property type="evidence" value="ECO:0007669"/>
    <property type="project" value="UniProtKB-SubCell"/>
</dbReference>
<dbReference type="GO" id="GO:0050136">
    <property type="term" value="F:NADH:ubiquinone reductase (non-electrogenic) activity"/>
    <property type="evidence" value="ECO:0007669"/>
    <property type="project" value="UniProtKB-UniRule"/>
</dbReference>
<dbReference type="GO" id="GO:0048038">
    <property type="term" value="F:quinone binding"/>
    <property type="evidence" value="ECO:0007669"/>
    <property type="project" value="UniProtKB-KW"/>
</dbReference>
<dbReference type="GO" id="GO:0042773">
    <property type="term" value="P:ATP synthesis coupled electron transport"/>
    <property type="evidence" value="ECO:0007669"/>
    <property type="project" value="InterPro"/>
</dbReference>
<dbReference type="FunFam" id="1.10.287.3510:FF:000001">
    <property type="entry name" value="NADH-quinone oxidoreductase subunit K"/>
    <property type="match status" value="1"/>
</dbReference>
<dbReference type="Gene3D" id="1.10.287.3510">
    <property type="match status" value="1"/>
</dbReference>
<dbReference type="HAMAP" id="MF_01456">
    <property type="entry name" value="NDH1_NuoK"/>
    <property type="match status" value="1"/>
</dbReference>
<dbReference type="InterPro" id="IPR001133">
    <property type="entry name" value="NADH_UbQ_OxRdtase_chain4L/K"/>
</dbReference>
<dbReference type="InterPro" id="IPR039428">
    <property type="entry name" value="NUOK/Mnh_C1-like"/>
</dbReference>
<dbReference type="NCBIfam" id="NF004320">
    <property type="entry name" value="PRK05715.1-2"/>
    <property type="match status" value="1"/>
</dbReference>
<dbReference type="NCBIfam" id="NF004321">
    <property type="entry name" value="PRK05715.1-3"/>
    <property type="match status" value="1"/>
</dbReference>
<dbReference type="NCBIfam" id="NF004323">
    <property type="entry name" value="PRK05715.1-5"/>
    <property type="match status" value="1"/>
</dbReference>
<dbReference type="PANTHER" id="PTHR11434:SF21">
    <property type="entry name" value="NADH DEHYDROGENASE SUBUNIT 4L-RELATED"/>
    <property type="match status" value="1"/>
</dbReference>
<dbReference type="PANTHER" id="PTHR11434">
    <property type="entry name" value="NADH-UBIQUINONE OXIDOREDUCTASE SUBUNIT ND4L"/>
    <property type="match status" value="1"/>
</dbReference>
<dbReference type="Pfam" id="PF00420">
    <property type="entry name" value="Oxidored_q2"/>
    <property type="match status" value="1"/>
</dbReference>
<feature type="chain" id="PRO_0000390140" description="NADH-quinone oxidoreductase subunit K">
    <location>
        <begin position="1"/>
        <end position="101"/>
    </location>
</feature>
<feature type="transmembrane region" description="Helical" evidence="1">
    <location>
        <begin position="4"/>
        <end position="24"/>
    </location>
</feature>
<feature type="transmembrane region" description="Helical" evidence="1">
    <location>
        <begin position="30"/>
        <end position="50"/>
    </location>
</feature>
<feature type="transmembrane region" description="Helical" evidence="1">
    <location>
        <begin position="61"/>
        <end position="81"/>
    </location>
</feature>
<name>NUOK_NEIG2</name>
<comment type="function">
    <text evidence="1">NDH-1 shuttles electrons from NADH, via FMN and iron-sulfur (Fe-S) centers, to quinones in the respiratory chain. The immediate electron acceptor for the enzyme in this species is believed to be ubiquinone. Couples the redox reaction to proton translocation (for every two electrons transferred, four hydrogen ions are translocated across the cytoplasmic membrane), and thus conserves the redox energy in a proton gradient.</text>
</comment>
<comment type="catalytic activity">
    <reaction evidence="1">
        <text>a quinone + NADH + 5 H(+)(in) = a quinol + NAD(+) + 4 H(+)(out)</text>
        <dbReference type="Rhea" id="RHEA:57888"/>
        <dbReference type="ChEBI" id="CHEBI:15378"/>
        <dbReference type="ChEBI" id="CHEBI:24646"/>
        <dbReference type="ChEBI" id="CHEBI:57540"/>
        <dbReference type="ChEBI" id="CHEBI:57945"/>
        <dbReference type="ChEBI" id="CHEBI:132124"/>
    </reaction>
</comment>
<comment type="subunit">
    <text evidence="1">NDH-1 is composed of 14 different subunits. Subunits NuoA, H, J, K, L, M, N constitute the membrane sector of the complex.</text>
</comment>
<comment type="subcellular location">
    <subcellularLocation>
        <location evidence="1">Cell inner membrane</location>
        <topology evidence="1">Multi-pass membrane protein</topology>
    </subcellularLocation>
</comment>
<comment type="similarity">
    <text evidence="1">Belongs to the complex I subunit 4L family.</text>
</comment>
<gene>
    <name evidence="1" type="primary">nuoK</name>
    <name type="ordered locus">NGK_2143</name>
</gene>